<evidence type="ECO:0000255" key="1">
    <source>
        <dbReference type="HAMAP-Rule" id="MF_01347"/>
    </source>
</evidence>
<proteinExistence type="inferred from homology"/>
<protein>
    <recommendedName>
        <fullName evidence="1">ATP synthase subunit beta</fullName>
        <ecNumber evidence="1">7.1.2.2</ecNumber>
    </recommendedName>
    <alternativeName>
        <fullName evidence="1">ATP synthase F1 sector subunit beta</fullName>
    </alternativeName>
    <alternativeName>
        <fullName evidence="1">F-ATPase subunit beta</fullName>
    </alternativeName>
</protein>
<keyword id="KW-0066">ATP synthesis</keyword>
<keyword id="KW-0067">ATP-binding</keyword>
<keyword id="KW-0997">Cell inner membrane</keyword>
<keyword id="KW-1003">Cell membrane</keyword>
<keyword id="KW-0139">CF(1)</keyword>
<keyword id="KW-0375">Hydrogen ion transport</keyword>
<keyword id="KW-0406">Ion transport</keyword>
<keyword id="KW-0472">Membrane</keyword>
<keyword id="KW-0547">Nucleotide-binding</keyword>
<keyword id="KW-1278">Translocase</keyword>
<keyword id="KW-0813">Transport</keyword>
<gene>
    <name evidence="1" type="primary">atpD</name>
    <name type="ordered locus">A1G_06760</name>
</gene>
<comment type="function">
    <text evidence="1">Produces ATP from ADP in the presence of a proton gradient across the membrane. The catalytic sites are hosted primarily by the beta subunits.</text>
</comment>
<comment type="catalytic activity">
    <reaction evidence="1">
        <text>ATP + H2O + 4 H(+)(in) = ADP + phosphate + 5 H(+)(out)</text>
        <dbReference type="Rhea" id="RHEA:57720"/>
        <dbReference type="ChEBI" id="CHEBI:15377"/>
        <dbReference type="ChEBI" id="CHEBI:15378"/>
        <dbReference type="ChEBI" id="CHEBI:30616"/>
        <dbReference type="ChEBI" id="CHEBI:43474"/>
        <dbReference type="ChEBI" id="CHEBI:456216"/>
        <dbReference type="EC" id="7.1.2.2"/>
    </reaction>
</comment>
<comment type="subunit">
    <text evidence="1">F-type ATPases have 2 components, CF(1) - the catalytic core - and CF(0) - the membrane proton channel. CF(1) has five subunits: alpha(3), beta(3), gamma(1), delta(1), epsilon(1). CF(0) has three main subunits: a(1), b(2) and c(9-12). The alpha and beta chains form an alternating ring which encloses part of the gamma chain. CF(1) is attached to CF(0) by a central stalk formed by the gamma and epsilon chains, while a peripheral stalk is formed by the delta and b chains.</text>
</comment>
<comment type="subcellular location">
    <subcellularLocation>
        <location evidence="1">Cell inner membrane</location>
        <topology evidence="1">Peripheral membrane protein</topology>
    </subcellularLocation>
</comment>
<comment type="similarity">
    <text evidence="1">Belongs to the ATPase alpha/beta chains family.</text>
</comment>
<sequence>MTKNIGKITQIISAVVDVKFTNNGKLPEILNALECYNDTRRVVLEVAQHIGDDTVRCIAMDSMEGLVRGVEVIDTGSPIRIPVGTETLGRIMNVVGEPIDGKGDIKSSNISSIYKPAPDFTNQSTERNILVTGIKVIDLLAPYTKGGKIGLFGGAGVGKTVLIMELINNVAKAHGGYTVFAGVGERTREGNDLYHEMIDSGVINLAEPEKSKVALVYGQMNEPPGARARVALSGLTIAESFRDMNEGQDVLFFVDNIFRFTQAGSEVSALLGRIPSAVGYQPTLATDMGELQERITSTKHGSITSVQAIYVPADDLTDPAPATSFAHLDATTVLSRQIAEFGIYPAVDPLDSNSQVLDPMIVGEEHYSVARQVQQVLQTYKSLQDIITILGMDELSEEDKLTVARARKIQRFLSQPFHVAEVFTGAAGKFVNLADTIAGFKGLVEGKYDDLPEAAFYMVGTIDEAIKKAQTLK</sequence>
<dbReference type="EC" id="7.1.2.2" evidence="1"/>
<dbReference type="EMBL" id="CP000848">
    <property type="protein sequence ID" value="ABV76801.1"/>
    <property type="molecule type" value="Genomic_DNA"/>
</dbReference>
<dbReference type="RefSeq" id="WP_012151343.1">
    <property type="nucleotide sequence ID" value="NZ_CP121767.1"/>
</dbReference>
<dbReference type="SMR" id="A8GTS6"/>
<dbReference type="GeneID" id="79937845"/>
<dbReference type="KEGG" id="rri:A1G_06760"/>
<dbReference type="HOGENOM" id="CLU_022398_0_2_5"/>
<dbReference type="Proteomes" id="UP000006832">
    <property type="component" value="Chromosome"/>
</dbReference>
<dbReference type="GO" id="GO:0005886">
    <property type="term" value="C:plasma membrane"/>
    <property type="evidence" value="ECO:0007669"/>
    <property type="project" value="UniProtKB-SubCell"/>
</dbReference>
<dbReference type="GO" id="GO:0045259">
    <property type="term" value="C:proton-transporting ATP synthase complex"/>
    <property type="evidence" value="ECO:0007669"/>
    <property type="project" value="UniProtKB-KW"/>
</dbReference>
<dbReference type="GO" id="GO:0005524">
    <property type="term" value="F:ATP binding"/>
    <property type="evidence" value="ECO:0007669"/>
    <property type="project" value="UniProtKB-UniRule"/>
</dbReference>
<dbReference type="GO" id="GO:0016887">
    <property type="term" value="F:ATP hydrolysis activity"/>
    <property type="evidence" value="ECO:0007669"/>
    <property type="project" value="InterPro"/>
</dbReference>
<dbReference type="GO" id="GO:0046933">
    <property type="term" value="F:proton-transporting ATP synthase activity, rotational mechanism"/>
    <property type="evidence" value="ECO:0007669"/>
    <property type="project" value="UniProtKB-UniRule"/>
</dbReference>
<dbReference type="CDD" id="cd18110">
    <property type="entry name" value="ATP-synt_F1_beta_C"/>
    <property type="match status" value="1"/>
</dbReference>
<dbReference type="CDD" id="cd18115">
    <property type="entry name" value="ATP-synt_F1_beta_N"/>
    <property type="match status" value="1"/>
</dbReference>
<dbReference type="CDD" id="cd01133">
    <property type="entry name" value="F1-ATPase_beta_CD"/>
    <property type="match status" value="1"/>
</dbReference>
<dbReference type="FunFam" id="1.10.1140.10:FF:000001">
    <property type="entry name" value="ATP synthase subunit beta"/>
    <property type="match status" value="1"/>
</dbReference>
<dbReference type="FunFam" id="2.40.10.170:FF:000014">
    <property type="entry name" value="ATP synthase subunit beta"/>
    <property type="match status" value="1"/>
</dbReference>
<dbReference type="FunFam" id="3.40.50.300:FF:000026">
    <property type="entry name" value="ATP synthase subunit beta"/>
    <property type="match status" value="1"/>
</dbReference>
<dbReference type="Gene3D" id="2.40.10.170">
    <property type="match status" value="1"/>
</dbReference>
<dbReference type="Gene3D" id="1.10.1140.10">
    <property type="entry name" value="Bovine Mitochondrial F1-atpase, Atp Synthase Beta Chain, Chain D, domain 3"/>
    <property type="match status" value="1"/>
</dbReference>
<dbReference type="Gene3D" id="3.40.50.300">
    <property type="entry name" value="P-loop containing nucleotide triphosphate hydrolases"/>
    <property type="match status" value="1"/>
</dbReference>
<dbReference type="HAMAP" id="MF_01347">
    <property type="entry name" value="ATP_synth_beta_bact"/>
    <property type="match status" value="1"/>
</dbReference>
<dbReference type="InterPro" id="IPR003593">
    <property type="entry name" value="AAA+_ATPase"/>
</dbReference>
<dbReference type="InterPro" id="IPR055190">
    <property type="entry name" value="ATP-synt_VA_C"/>
</dbReference>
<dbReference type="InterPro" id="IPR005722">
    <property type="entry name" value="ATP_synth_F1_bsu"/>
</dbReference>
<dbReference type="InterPro" id="IPR020003">
    <property type="entry name" value="ATPase_a/bsu_AS"/>
</dbReference>
<dbReference type="InterPro" id="IPR050053">
    <property type="entry name" value="ATPase_alpha/beta_chains"/>
</dbReference>
<dbReference type="InterPro" id="IPR004100">
    <property type="entry name" value="ATPase_F1/V1/A1_a/bsu_N"/>
</dbReference>
<dbReference type="InterPro" id="IPR036121">
    <property type="entry name" value="ATPase_F1/V1/A1_a/bsu_N_sf"/>
</dbReference>
<dbReference type="InterPro" id="IPR000194">
    <property type="entry name" value="ATPase_F1/V1/A1_a/bsu_nucl-bd"/>
</dbReference>
<dbReference type="InterPro" id="IPR024034">
    <property type="entry name" value="ATPase_F1/V1_b/a_C"/>
</dbReference>
<dbReference type="InterPro" id="IPR027417">
    <property type="entry name" value="P-loop_NTPase"/>
</dbReference>
<dbReference type="NCBIfam" id="TIGR01039">
    <property type="entry name" value="atpD"/>
    <property type="match status" value="1"/>
</dbReference>
<dbReference type="PANTHER" id="PTHR15184">
    <property type="entry name" value="ATP SYNTHASE"/>
    <property type="match status" value="1"/>
</dbReference>
<dbReference type="PANTHER" id="PTHR15184:SF71">
    <property type="entry name" value="ATP SYNTHASE SUBUNIT BETA, MITOCHONDRIAL"/>
    <property type="match status" value="1"/>
</dbReference>
<dbReference type="Pfam" id="PF00006">
    <property type="entry name" value="ATP-synt_ab"/>
    <property type="match status" value="1"/>
</dbReference>
<dbReference type="Pfam" id="PF02874">
    <property type="entry name" value="ATP-synt_ab_N"/>
    <property type="match status" value="1"/>
</dbReference>
<dbReference type="Pfam" id="PF22919">
    <property type="entry name" value="ATP-synt_VA_C"/>
    <property type="match status" value="1"/>
</dbReference>
<dbReference type="PIRSF" id="PIRSF039072">
    <property type="entry name" value="ATPase_subunit_beta"/>
    <property type="match status" value="1"/>
</dbReference>
<dbReference type="SMART" id="SM00382">
    <property type="entry name" value="AAA"/>
    <property type="match status" value="1"/>
</dbReference>
<dbReference type="SUPFAM" id="SSF47917">
    <property type="entry name" value="C-terminal domain of alpha and beta subunits of F1 ATP synthase"/>
    <property type="match status" value="1"/>
</dbReference>
<dbReference type="SUPFAM" id="SSF50615">
    <property type="entry name" value="N-terminal domain of alpha and beta subunits of F1 ATP synthase"/>
    <property type="match status" value="1"/>
</dbReference>
<dbReference type="SUPFAM" id="SSF52540">
    <property type="entry name" value="P-loop containing nucleoside triphosphate hydrolases"/>
    <property type="match status" value="1"/>
</dbReference>
<dbReference type="PROSITE" id="PS00152">
    <property type="entry name" value="ATPASE_ALPHA_BETA"/>
    <property type="match status" value="1"/>
</dbReference>
<accession>A8GTS6</accession>
<feature type="chain" id="PRO_1000055155" description="ATP synthase subunit beta">
    <location>
        <begin position="1"/>
        <end position="473"/>
    </location>
</feature>
<feature type="binding site" evidence="1">
    <location>
        <begin position="153"/>
        <end position="160"/>
    </location>
    <ligand>
        <name>ATP</name>
        <dbReference type="ChEBI" id="CHEBI:30616"/>
    </ligand>
</feature>
<reference key="1">
    <citation type="submission" date="2007-09" db="EMBL/GenBank/DDBJ databases">
        <title>Complete genome sequence of Rickettsia rickettsii.</title>
        <authorList>
            <person name="Madan A."/>
            <person name="Fahey J."/>
            <person name="Helton E."/>
            <person name="Ketteman M."/>
            <person name="Madan A."/>
            <person name="Rodrigues S."/>
            <person name="Sanchez A."/>
            <person name="Dasch G."/>
            <person name="Eremeeva M."/>
        </authorList>
    </citation>
    <scope>NUCLEOTIDE SEQUENCE [LARGE SCALE GENOMIC DNA]</scope>
    <source>
        <strain>Sheila Smith</strain>
    </source>
</reference>
<name>ATPB_RICRS</name>
<organism>
    <name type="scientific">Rickettsia rickettsii (strain Sheila Smith)</name>
    <dbReference type="NCBI Taxonomy" id="392021"/>
    <lineage>
        <taxon>Bacteria</taxon>
        <taxon>Pseudomonadati</taxon>
        <taxon>Pseudomonadota</taxon>
        <taxon>Alphaproteobacteria</taxon>
        <taxon>Rickettsiales</taxon>
        <taxon>Rickettsiaceae</taxon>
        <taxon>Rickettsieae</taxon>
        <taxon>Rickettsia</taxon>
        <taxon>spotted fever group</taxon>
    </lineage>
</organism>